<accession>P56298</accession>
<dbReference type="EC" id="2.7.7.6"/>
<dbReference type="EMBL" id="AB001684">
    <property type="protein sequence ID" value="BAA57996.1"/>
    <property type="molecule type" value="Genomic_DNA"/>
</dbReference>
<dbReference type="PIR" id="T07348">
    <property type="entry name" value="T07348"/>
</dbReference>
<dbReference type="RefSeq" id="NP_045920.1">
    <property type="nucleotide sequence ID" value="NC_001865.1"/>
</dbReference>
<dbReference type="SMR" id="P56298"/>
<dbReference type="GeneID" id="809101"/>
<dbReference type="GO" id="GO:0009507">
    <property type="term" value="C:chloroplast"/>
    <property type="evidence" value="ECO:0007669"/>
    <property type="project" value="UniProtKB-SubCell"/>
</dbReference>
<dbReference type="GO" id="GO:0000428">
    <property type="term" value="C:DNA-directed RNA polymerase complex"/>
    <property type="evidence" value="ECO:0007669"/>
    <property type="project" value="UniProtKB-KW"/>
</dbReference>
<dbReference type="GO" id="GO:0005739">
    <property type="term" value="C:mitochondrion"/>
    <property type="evidence" value="ECO:0007669"/>
    <property type="project" value="GOC"/>
</dbReference>
<dbReference type="GO" id="GO:0003899">
    <property type="term" value="F:DNA-directed RNA polymerase activity"/>
    <property type="evidence" value="ECO:0007669"/>
    <property type="project" value="UniProtKB-EC"/>
</dbReference>
<dbReference type="GO" id="GO:0046983">
    <property type="term" value="F:protein dimerization activity"/>
    <property type="evidence" value="ECO:0007669"/>
    <property type="project" value="InterPro"/>
</dbReference>
<dbReference type="GO" id="GO:0006351">
    <property type="term" value="P:DNA-templated transcription"/>
    <property type="evidence" value="ECO:0007669"/>
    <property type="project" value="InterPro"/>
</dbReference>
<dbReference type="CDD" id="cd06928">
    <property type="entry name" value="RNAP_alpha_NTD"/>
    <property type="match status" value="1"/>
</dbReference>
<dbReference type="Gene3D" id="2.170.120.12">
    <property type="entry name" value="DNA-directed RNA polymerase, insert domain"/>
    <property type="match status" value="1"/>
</dbReference>
<dbReference type="Gene3D" id="3.30.1360.10">
    <property type="entry name" value="RNA polymerase, RBP11-like subunit"/>
    <property type="match status" value="1"/>
</dbReference>
<dbReference type="InterPro" id="IPR011262">
    <property type="entry name" value="DNA-dir_RNA_pol_insert"/>
</dbReference>
<dbReference type="InterPro" id="IPR011263">
    <property type="entry name" value="DNA-dir_RNA_pol_RpoA/D/Rpb3"/>
</dbReference>
<dbReference type="InterPro" id="IPR036603">
    <property type="entry name" value="RBP11-like"/>
</dbReference>
<dbReference type="InterPro" id="IPR036643">
    <property type="entry name" value="RNApol_insert_sf"/>
</dbReference>
<dbReference type="Pfam" id="PF01000">
    <property type="entry name" value="RNA_pol_A_bac"/>
    <property type="match status" value="1"/>
</dbReference>
<dbReference type="Pfam" id="PF01193">
    <property type="entry name" value="RNA_pol_L"/>
    <property type="match status" value="1"/>
</dbReference>
<dbReference type="SMART" id="SM00662">
    <property type="entry name" value="RPOLD"/>
    <property type="match status" value="1"/>
</dbReference>
<dbReference type="SUPFAM" id="SSF56553">
    <property type="entry name" value="Insert subdomain of RNA polymerase alpha subunit"/>
    <property type="match status" value="1"/>
</dbReference>
<dbReference type="SUPFAM" id="SSF55257">
    <property type="entry name" value="RBP11-like subunits of RNA polymerase"/>
    <property type="match status" value="1"/>
</dbReference>
<comment type="function">
    <text evidence="1">DNA-dependent RNA polymerase catalyzes the transcription of DNA into RNA using the four ribonucleoside triphosphates as substrates.</text>
</comment>
<comment type="catalytic activity">
    <reaction>
        <text>RNA(n) + a ribonucleoside 5'-triphosphate = RNA(n+1) + diphosphate</text>
        <dbReference type="Rhea" id="RHEA:21248"/>
        <dbReference type="Rhea" id="RHEA-COMP:14527"/>
        <dbReference type="Rhea" id="RHEA-COMP:17342"/>
        <dbReference type="ChEBI" id="CHEBI:33019"/>
        <dbReference type="ChEBI" id="CHEBI:61557"/>
        <dbReference type="ChEBI" id="CHEBI:140395"/>
        <dbReference type="EC" id="2.7.7.6"/>
    </reaction>
</comment>
<comment type="subunit">
    <text evidence="1">In plastids the minimal PEP RNA polymerase catalytic core is composed of four subunits: alpha, beta, beta', and beta''. When a (nuclear-encoded) sigma factor is associated with the core the holoenzyme is formed, which can initiate transcription (By similarity).</text>
</comment>
<comment type="subcellular location">
    <subcellularLocation>
        <location>Plastid</location>
        <location>Chloroplast</location>
    </subcellularLocation>
</comment>
<comment type="similarity">
    <text evidence="2">Belongs to the RNA polymerase alpha chain family.</text>
</comment>
<comment type="caution">
    <text evidence="2">The C-terminal domain thought to be required for interaction with some regulatory factors is missing from this protein.</text>
</comment>
<feature type="chain" id="PRO_0000175447" description="DNA-directed RNA polymerase subunit alpha">
    <location>
        <begin position="1"/>
        <end position="278"/>
    </location>
</feature>
<evidence type="ECO:0000250" key="1"/>
<evidence type="ECO:0000305" key="2"/>
<sequence length="278" mass="31611">MMKTHNLFVSCIESRVQDQGSLYARFHIGTFFRGQALTFGNSIRRALLSEMPGFLMTDVRIQGATHEFAVLPDVEETVLEILLNLKKTVFVPRIPKNQKFETFQGFGFLKNNGPGKVRAADIRLPETVQCVSPEVHIATLTSGAELSLRFNLQFRNFSQLEKREGTFKSKTVAQAKTEDGNVQDTTNELPTLEKNSLFFQQLQNKRNSKDQLFLDTVPMPVQKVNYVIKSLNAKNGSEYIILEIWTDGSLYPQESVEFALRNLTDLFFQFANISKKSN</sequence>
<reference key="1">
    <citation type="journal article" date="1997" name="Proc. Natl. Acad. Sci. U.S.A.">
        <title>Complete nucleotide sequence of the chloroplast genome from the green alga Chlorella vulgaris: the existence of genes possibly involved in chloroplast division.</title>
        <authorList>
            <person name="Wakasugi T."/>
            <person name="Nagai T."/>
            <person name="Kapoor M."/>
            <person name="Sugita M."/>
            <person name="Ito M."/>
            <person name="Ito S."/>
            <person name="Tsudzuki J."/>
            <person name="Nakashima K."/>
            <person name="Tsudzuki T."/>
            <person name="Suzuki Y."/>
            <person name="Hamada A."/>
            <person name="Ohta T."/>
            <person name="Inamura A."/>
            <person name="Yoshinaga K."/>
            <person name="Sugiura M."/>
        </authorList>
    </citation>
    <scope>NUCLEOTIDE SEQUENCE [LARGE SCALE GENOMIC DNA]</scope>
    <source>
        <strain>IAM C-27 / Tamiya</strain>
    </source>
</reference>
<keyword id="KW-0150">Chloroplast</keyword>
<keyword id="KW-0240">DNA-directed RNA polymerase</keyword>
<keyword id="KW-0548">Nucleotidyltransferase</keyword>
<keyword id="KW-0934">Plastid</keyword>
<keyword id="KW-0804">Transcription</keyword>
<keyword id="KW-0808">Transferase</keyword>
<proteinExistence type="inferred from homology"/>
<geneLocation type="chloroplast"/>
<gene>
    <name type="primary">rpoA</name>
</gene>
<name>RPOA_CHLVU</name>
<organism>
    <name type="scientific">Chlorella vulgaris</name>
    <name type="common">Green alga</name>
    <dbReference type="NCBI Taxonomy" id="3077"/>
    <lineage>
        <taxon>Eukaryota</taxon>
        <taxon>Viridiplantae</taxon>
        <taxon>Chlorophyta</taxon>
        <taxon>core chlorophytes</taxon>
        <taxon>Trebouxiophyceae</taxon>
        <taxon>Chlorellales</taxon>
        <taxon>Chlorellaceae</taxon>
        <taxon>Chlorella clade</taxon>
        <taxon>Chlorella</taxon>
    </lineage>
</organism>
<protein>
    <recommendedName>
        <fullName>DNA-directed RNA polymerase subunit alpha</fullName>
        <shortName>PEP</shortName>
        <ecNumber>2.7.7.6</ecNumber>
    </recommendedName>
    <alternativeName>
        <fullName>Plastid-encoded RNA polymerase subunit alpha</fullName>
        <shortName>RNA polymerase subunit alpha</shortName>
    </alternativeName>
</protein>